<feature type="chain" id="PRO_1000100463" description="Nicotinate-nucleotide--dimethylbenzimidazole phosphoribosyltransferase">
    <location>
        <begin position="1"/>
        <end position="359"/>
    </location>
</feature>
<feature type="active site" description="Proton acceptor" evidence="1">
    <location>
        <position position="318"/>
    </location>
</feature>
<sequence>MQILADLLNTIPAIDSTAMSRAQRHIDGLLKPVGSLGKLEVLAIQLAGMPGLNGIPHVGKKAVLVMCADHGVWEEGVAISPKEVTAIQAENMTRGTTGVCVLAEQAGANVHVIDVGIDTAEPIPGLINMRVARGSGNIASAPAMSRRQAEKLLLDVICYTQELAKNGVTLFGVGELGMANTTPAAAIVSTITGRDPEEVVGIGANLPTDKLANKIDVVRRAITLNQPNPQDGVDVLAKVGGFDLVGIAGVMLGAASCGLPVLLDGFLSYAAALAACQMSPAIKPYLIPSHLSAEKGARIALSHLGLEPYLNMEMRLGEGSGAALAMPIIEAACAIYNNMGELAASNIVLPGNTTSDLNS</sequence>
<name>COBT_ECODH</name>
<accession>B1X6S9</accession>
<organism>
    <name type="scientific">Escherichia coli (strain K12 / DH10B)</name>
    <dbReference type="NCBI Taxonomy" id="316385"/>
    <lineage>
        <taxon>Bacteria</taxon>
        <taxon>Pseudomonadati</taxon>
        <taxon>Pseudomonadota</taxon>
        <taxon>Gammaproteobacteria</taxon>
        <taxon>Enterobacterales</taxon>
        <taxon>Enterobacteriaceae</taxon>
        <taxon>Escherichia</taxon>
    </lineage>
</organism>
<dbReference type="EC" id="2.4.2.21" evidence="1"/>
<dbReference type="EMBL" id="CP000948">
    <property type="protein sequence ID" value="ACB03165.1"/>
    <property type="molecule type" value="Genomic_DNA"/>
</dbReference>
<dbReference type="RefSeq" id="WP_001166160.1">
    <property type="nucleotide sequence ID" value="NC_010473.1"/>
</dbReference>
<dbReference type="SMR" id="B1X6S9"/>
<dbReference type="KEGG" id="ecd:ECDH10B_2135"/>
<dbReference type="HOGENOM" id="CLU_002982_0_0_6"/>
<dbReference type="UniPathway" id="UPA00061">
    <property type="reaction ID" value="UER00516"/>
</dbReference>
<dbReference type="GO" id="GO:0008939">
    <property type="term" value="F:nicotinate-nucleotide-dimethylbenzimidazole phosphoribosyltransferase activity"/>
    <property type="evidence" value="ECO:0007669"/>
    <property type="project" value="UniProtKB-UniRule"/>
</dbReference>
<dbReference type="GO" id="GO:0009236">
    <property type="term" value="P:cobalamin biosynthetic process"/>
    <property type="evidence" value="ECO:0007669"/>
    <property type="project" value="UniProtKB-KW"/>
</dbReference>
<dbReference type="CDD" id="cd02439">
    <property type="entry name" value="DMB-PRT_CobT"/>
    <property type="match status" value="1"/>
</dbReference>
<dbReference type="FunFam" id="1.10.1610.10:FF:000001">
    <property type="entry name" value="Nicotinate-nucleotide--dimethylbenzimidazole phosphoribosyltransferase"/>
    <property type="match status" value="1"/>
</dbReference>
<dbReference type="FunFam" id="3.40.50.10210:FF:000001">
    <property type="entry name" value="Nicotinate-nucleotide--dimethylbenzimidazole phosphoribosyltransferase"/>
    <property type="match status" value="1"/>
</dbReference>
<dbReference type="Gene3D" id="1.10.1610.10">
    <property type="match status" value="1"/>
</dbReference>
<dbReference type="Gene3D" id="3.40.50.10210">
    <property type="match status" value="1"/>
</dbReference>
<dbReference type="HAMAP" id="MF_00230">
    <property type="entry name" value="CobT"/>
    <property type="match status" value="1"/>
</dbReference>
<dbReference type="InterPro" id="IPR003200">
    <property type="entry name" value="Nict_dMeBzImd_PRibTrfase"/>
</dbReference>
<dbReference type="InterPro" id="IPR017846">
    <property type="entry name" value="Nict_dMeBzImd_PRibTrfase_bact"/>
</dbReference>
<dbReference type="InterPro" id="IPR023195">
    <property type="entry name" value="Nict_dMeBzImd_PRibTrfase_N"/>
</dbReference>
<dbReference type="InterPro" id="IPR036087">
    <property type="entry name" value="Nict_dMeBzImd_PRibTrfase_sf"/>
</dbReference>
<dbReference type="NCBIfam" id="TIGR03160">
    <property type="entry name" value="cobT_DBIPRT"/>
    <property type="match status" value="1"/>
</dbReference>
<dbReference type="NCBIfam" id="NF000996">
    <property type="entry name" value="PRK00105.1"/>
    <property type="match status" value="1"/>
</dbReference>
<dbReference type="PANTHER" id="PTHR43463">
    <property type="entry name" value="NICOTINATE-NUCLEOTIDE--DIMETHYLBENZIMIDAZOLE PHOSPHORIBOSYLTRANSFERASE"/>
    <property type="match status" value="1"/>
</dbReference>
<dbReference type="PANTHER" id="PTHR43463:SF1">
    <property type="entry name" value="NICOTINATE-NUCLEOTIDE--DIMETHYLBENZIMIDAZOLE PHOSPHORIBOSYLTRANSFERASE"/>
    <property type="match status" value="1"/>
</dbReference>
<dbReference type="Pfam" id="PF02277">
    <property type="entry name" value="DBI_PRT"/>
    <property type="match status" value="1"/>
</dbReference>
<dbReference type="SUPFAM" id="SSF52733">
    <property type="entry name" value="Nicotinate mononucleotide:5,6-dimethylbenzimidazole phosphoribosyltransferase (CobT)"/>
    <property type="match status" value="1"/>
</dbReference>
<protein>
    <recommendedName>
        <fullName evidence="1">Nicotinate-nucleotide--dimethylbenzimidazole phosphoribosyltransferase</fullName>
        <shortName evidence="1">NN:DBI PRT</shortName>
        <ecNumber evidence="1">2.4.2.21</ecNumber>
    </recommendedName>
    <alternativeName>
        <fullName evidence="1">N(1)-alpha-phosphoribosyltransferase</fullName>
    </alternativeName>
</protein>
<gene>
    <name evidence="1" type="primary">cobT</name>
    <name type="ordered locus">ECDH10B_2135</name>
</gene>
<comment type="function">
    <text evidence="1">Catalyzes the synthesis of alpha-ribazole-5'-phosphate from nicotinate mononucleotide (NAMN) and 5,6-dimethylbenzimidazole (DMB).</text>
</comment>
<comment type="catalytic activity">
    <reaction evidence="1">
        <text>5,6-dimethylbenzimidazole + nicotinate beta-D-ribonucleotide = alpha-ribazole 5'-phosphate + nicotinate + H(+)</text>
        <dbReference type="Rhea" id="RHEA:11196"/>
        <dbReference type="ChEBI" id="CHEBI:15378"/>
        <dbReference type="ChEBI" id="CHEBI:15890"/>
        <dbReference type="ChEBI" id="CHEBI:32544"/>
        <dbReference type="ChEBI" id="CHEBI:57502"/>
        <dbReference type="ChEBI" id="CHEBI:57918"/>
        <dbReference type="EC" id="2.4.2.21"/>
    </reaction>
</comment>
<comment type="pathway">
    <text evidence="1">Nucleoside biosynthesis; alpha-ribazole biosynthesis; alpha-ribazole from 5,6-dimethylbenzimidazole: step 1/2.</text>
</comment>
<comment type="subunit">
    <text evidence="1">Homodimer.</text>
</comment>
<comment type="similarity">
    <text evidence="1">Belongs to the CobT family.</text>
</comment>
<reference key="1">
    <citation type="journal article" date="2008" name="J. Bacteriol.">
        <title>The complete genome sequence of Escherichia coli DH10B: insights into the biology of a laboratory workhorse.</title>
        <authorList>
            <person name="Durfee T."/>
            <person name="Nelson R."/>
            <person name="Baldwin S."/>
            <person name="Plunkett G. III"/>
            <person name="Burland V."/>
            <person name="Mau B."/>
            <person name="Petrosino J.F."/>
            <person name="Qin X."/>
            <person name="Muzny D.M."/>
            <person name="Ayele M."/>
            <person name="Gibbs R.A."/>
            <person name="Csorgo B."/>
            <person name="Posfai G."/>
            <person name="Weinstock G.M."/>
            <person name="Blattner F.R."/>
        </authorList>
    </citation>
    <scope>NUCLEOTIDE SEQUENCE [LARGE SCALE GENOMIC DNA]</scope>
    <source>
        <strain>K12 / DH10B</strain>
    </source>
</reference>
<proteinExistence type="inferred from homology"/>
<keyword id="KW-0169">Cobalamin biosynthesis</keyword>
<keyword id="KW-0328">Glycosyltransferase</keyword>
<keyword id="KW-0808">Transferase</keyword>
<evidence type="ECO:0000255" key="1">
    <source>
        <dbReference type="HAMAP-Rule" id="MF_00230"/>
    </source>
</evidence>